<gene>
    <name evidence="1" type="primary">cysH</name>
    <name type="ordered locus">YpsIP31758_3309</name>
</gene>
<keyword id="KW-0963">Cytoplasm</keyword>
<keyword id="KW-0560">Oxidoreductase</keyword>
<accession>A7FLY8</accession>
<sequence length="244" mass="27852">MSQFNLSELNALPKAKQAAALVLVNGQLEHLTAQERVSWALDNLPGEFVLSSSFGIQAAVCLHLVTRQRPDIPVILTDTGYLFPETYRFIDDLTEKLQLNLQVFRAAHSPAWQEARYGKLWEQGVEGIERYNTLNKVEPMNRALEALGAQTWFAGLRREQSGGRSQLPVLALQRGIFKLLPIIDWDNRQVYQYLTQHGLSYHPLWEQGYLSVGDTHTTRKWEPGMSEEETRFFGLKRECGLHEG</sequence>
<proteinExistence type="inferred from homology"/>
<dbReference type="EC" id="1.8.4.8" evidence="1"/>
<dbReference type="EMBL" id="CP000720">
    <property type="protein sequence ID" value="ABS47225.1"/>
    <property type="molecule type" value="Genomic_DNA"/>
</dbReference>
<dbReference type="RefSeq" id="WP_011191774.1">
    <property type="nucleotide sequence ID" value="NC_009708.1"/>
</dbReference>
<dbReference type="SMR" id="A7FLY8"/>
<dbReference type="KEGG" id="ypi:YpsIP31758_3309"/>
<dbReference type="HOGENOM" id="CLU_044089_3_0_6"/>
<dbReference type="UniPathway" id="UPA00140">
    <property type="reaction ID" value="UER00206"/>
</dbReference>
<dbReference type="Proteomes" id="UP000002412">
    <property type="component" value="Chromosome"/>
</dbReference>
<dbReference type="GO" id="GO:0005737">
    <property type="term" value="C:cytoplasm"/>
    <property type="evidence" value="ECO:0007669"/>
    <property type="project" value="UniProtKB-SubCell"/>
</dbReference>
<dbReference type="GO" id="GO:0004604">
    <property type="term" value="F:phosphoadenylyl-sulfate reductase (thioredoxin) activity"/>
    <property type="evidence" value="ECO:0007669"/>
    <property type="project" value="UniProtKB-UniRule"/>
</dbReference>
<dbReference type="GO" id="GO:0070814">
    <property type="term" value="P:hydrogen sulfide biosynthetic process"/>
    <property type="evidence" value="ECO:0007669"/>
    <property type="project" value="UniProtKB-UniRule"/>
</dbReference>
<dbReference type="GO" id="GO:0019379">
    <property type="term" value="P:sulfate assimilation, phosphoadenylyl sulfate reduction by phosphoadenylyl-sulfate reductase (thioredoxin)"/>
    <property type="evidence" value="ECO:0007669"/>
    <property type="project" value="UniProtKB-UniRule"/>
</dbReference>
<dbReference type="CDD" id="cd23945">
    <property type="entry name" value="PAPS_reductase"/>
    <property type="match status" value="1"/>
</dbReference>
<dbReference type="FunFam" id="3.40.50.620:FF:000043">
    <property type="entry name" value="Phosphoadenosine phosphosulfate reductase"/>
    <property type="match status" value="1"/>
</dbReference>
<dbReference type="Gene3D" id="3.40.50.620">
    <property type="entry name" value="HUPs"/>
    <property type="match status" value="1"/>
</dbReference>
<dbReference type="HAMAP" id="MF_00063">
    <property type="entry name" value="CysH"/>
    <property type="match status" value="1"/>
</dbReference>
<dbReference type="InterPro" id="IPR004511">
    <property type="entry name" value="PAPS/APS_Rdtase"/>
</dbReference>
<dbReference type="InterPro" id="IPR002500">
    <property type="entry name" value="PAPS_reduct_dom"/>
</dbReference>
<dbReference type="InterPro" id="IPR011800">
    <property type="entry name" value="PAPS_reductase_CysH"/>
</dbReference>
<dbReference type="InterPro" id="IPR014729">
    <property type="entry name" value="Rossmann-like_a/b/a_fold"/>
</dbReference>
<dbReference type="NCBIfam" id="TIGR00434">
    <property type="entry name" value="cysH"/>
    <property type="match status" value="1"/>
</dbReference>
<dbReference type="NCBIfam" id="TIGR02057">
    <property type="entry name" value="PAPS_reductase"/>
    <property type="match status" value="1"/>
</dbReference>
<dbReference type="NCBIfam" id="NF002537">
    <property type="entry name" value="PRK02090.1"/>
    <property type="match status" value="1"/>
</dbReference>
<dbReference type="PANTHER" id="PTHR46509">
    <property type="entry name" value="PHOSPHOADENOSINE PHOSPHOSULFATE REDUCTASE"/>
    <property type="match status" value="1"/>
</dbReference>
<dbReference type="PANTHER" id="PTHR46509:SF1">
    <property type="entry name" value="PHOSPHOADENOSINE PHOSPHOSULFATE REDUCTASE"/>
    <property type="match status" value="1"/>
</dbReference>
<dbReference type="Pfam" id="PF01507">
    <property type="entry name" value="PAPS_reduct"/>
    <property type="match status" value="1"/>
</dbReference>
<dbReference type="PIRSF" id="PIRSF000857">
    <property type="entry name" value="PAPS_reductase"/>
    <property type="match status" value="1"/>
</dbReference>
<dbReference type="SUPFAM" id="SSF52402">
    <property type="entry name" value="Adenine nucleotide alpha hydrolases-like"/>
    <property type="match status" value="1"/>
</dbReference>
<reference key="1">
    <citation type="journal article" date="2007" name="PLoS Genet.">
        <title>The complete genome sequence of Yersinia pseudotuberculosis IP31758, the causative agent of Far East scarlet-like fever.</title>
        <authorList>
            <person name="Eppinger M."/>
            <person name="Rosovitz M.J."/>
            <person name="Fricke W.F."/>
            <person name="Rasko D.A."/>
            <person name="Kokorina G."/>
            <person name="Fayolle C."/>
            <person name="Lindler L.E."/>
            <person name="Carniel E."/>
            <person name="Ravel J."/>
        </authorList>
    </citation>
    <scope>NUCLEOTIDE SEQUENCE [LARGE SCALE GENOMIC DNA]</scope>
    <source>
        <strain>IP 31758</strain>
    </source>
</reference>
<evidence type="ECO:0000255" key="1">
    <source>
        <dbReference type="HAMAP-Rule" id="MF_00063"/>
    </source>
</evidence>
<feature type="chain" id="PRO_1000057434" description="Phosphoadenosine 5'-phosphosulfate reductase">
    <location>
        <begin position="1"/>
        <end position="244"/>
    </location>
</feature>
<feature type="active site" description="Nucleophile; cysteine thiosulfonate intermediate" evidence="1">
    <location>
        <position position="239"/>
    </location>
</feature>
<name>CYSH_YERP3</name>
<organism>
    <name type="scientific">Yersinia pseudotuberculosis serotype O:1b (strain IP 31758)</name>
    <dbReference type="NCBI Taxonomy" id="349747"/>
    <lineage>
        <taxon>Bacteria</taxon>
        <taxon>Pseudomonadati</taxon>
        <taxon>Pseudomonadota</taxon>
        <taxon>Gammaproteobacteria</taxon>
        <taxon>Enterobacterales</taxon>
        <taxon>Yersiniaceae</taxon>
        <taxon>Yersinia</taxon>
    </lineage>
</organism>
<protein>
    <recommendedName>
        <fullName evidence="1">Phosphoadenosine 5'-phosphosulfate reductase</fullName>
        <shortName evidence="1">PAPS reductase</shortName>
        <ecNumber evidence="1">1.8.4.8</ecNumber>
    </recommendedName>
    <alternativeName>
        <fullName evidence="1">3'-phosphoadenylylsulfate reductase</fullName>
    </alternativeName>
    <alternativeName>
        <fullName evidence="1">PAPS reductase, thioredoxin dependent</fullName>
    </alternativeName>
    <alternativeName>
        <fullName evidence="1">PAPS sulfotransferase</fullName>
    </alternativeName>
    <alternativeName>
        <fullName evidence="1">PAdoPS reductase</fullName>
    </alternativeName>
</protein>
<comment type="function">
    <text evidence="1">Catalyzes the formation of sulfite from phosphoadenosine 5'-phosphosulfate (PAPS) using thioredoxin as an electron donor.</text>
</comment>
<comment type="catalytic activity">
    <reaction evidence="1">
        <text>[thioredoxin]-disulfide + sulfite + adenosine 3',5'-bisphosphate + 2 H(+) = [thioredoxin]-dithiol + 3'-phosphoadenylyl sulfate</text>
        <dbReference type="Rhea" id="RHEA:11724"/>
        <dbReference type="Rhea" id="RHEA-COMP:10698"/>
        <dbReference type="Rhea" id="RHEA-COMP:10700"/>
        <dbReference type="ChEBI" id="CHEBI:15378"/>
        <dbReference type="ChEBI" id="CHEBI:17359"/>
        <dbReference type="ChEBI" id="CHEBI:29950"/>
        <dbReference type="ChEBI" id="CHEBI:50058"/>
        <dbReference type="ChEBI" id="CHEBI:58339"/>
        <dbReference type="ChEBI" id="CHEBI:58343"/>
        <dbReference type="EC" id="1.8.4.8"/>
    </reaction>
</comment>
<comment type="pathway">
    <text evidence="1">Sulfur metabolism; hydrogen sulfide biosynthesis; sulfite from sulfate: step 3/3.</text>
</comment>
<comment type="subcellular location">
    <subcellularLocation>
        <location evidence="1">Cytoplasm</location>
    </subcellularLocation>
</comment>
<comment type="similarity">
    <text evidence="1">Belongs to the PAPS reductase family. CysH subfamily.</text>
</comment>